<proteinExistence type="inferred from homology"/>
<accession>Q6NJ65</accession>
<organism>
    <name type="scientific">Corynebacterium diphtheriae (strain ATCC 700971 / NCTC 13129 / Biotype gravis)</name>
    <dbReference type="NCBI Taxonomy" id="257309"/>
    <lineage>
        <taxon>Bacteria</taxon>
        <taxon>Bacillati</taxon>
        <taxon>Actinomycetota</taxon>
        <taxon>Actinomycetes</taxon>
        <taxon>Mycobacteriales</taxon>
        <taxon>Corynebacteriaceae</taxon>
        <taxon>Corynebacterium</taxon>
    </lineage>
</organism>
<feature type="chain" id="PRO_0000123137" description="Small ribosomal subunit protein uS11">
    <location>
        <begin position="1"/>
        <end position="134"/>
    </location>
</feature>
<dbReference type="EMBL" id="BX248355">
    <property type="protein sequence ID" value="CAE49058.1"/>
    <property type="molecule type" value="Genomic_DNA"/>
</dbReference>
<dbReference type="RefSeq" id="WP_004566855.1">
    <property type="nucleotide sequence ID" value="NC_002935.2"/>
</dbReference>
<dbReference type="SMR" id="Q6NJ65"/>
<dbReference type="STRING" id="257309.DIP0547"/>
<dbReference type="GeneID" id="97331156"/>
<dbReference type="KEGG" id="cdi:DIP0547"/>
<dbReference type="HOGENOM" id="CLU_072439_5_0_11"/>
<dbReference type="Proteomes" id="UP000002198">
    <property type="component" value="Chromosome"/>
</dbReference>
<dbReference type="GO" id="GO:1990904">
    <property type="term" value="C:ribonucleoprotein complex"/>
    <property type="evidence" value="ECO:0007669"/>
    <property type="project" value="UniProtKB-KW"/>
</dbReference>
<dbReference type="GO" id="GO:0005840">
    <property type="term" value="C:ribosome"/>
    <property type="evidence" value="ECO:0007669"/>
    <property type="project" value="UniProtKB-KW"/>
</dbReference>
<dbReference type="GO" id="GO:0019843">
    <property type="term" value="F:rRNA binding"/>
    <property type="evidence" value="ECO:0007669"/>
    <property type="project" value="UniProtKB-UniRule"/>
</dbReference>
<dbReference type="GO" id="GO:0003735">
    <property type="term" value="F:structural constituent of ribosome"/>
    <property type="evidence" value="ECO:0007669"/>
    <property type="project" value="InterPro"/>
</dbReference>
<dbReference type="GO" id="GO:0006412">
    <property type="term" value="P:translation"/>
    <property type="evidence" value="ECO:0007669"/>
    <property type="project" value="UniProtKB-UniRule"/>
</dbReference>
<dbReference type="FunFam" id="3.30.420.80:FF:000001">
    <property type="entry name" value="30S ribosomal protein S11"/>
    <property type="match status" value="1"/>
</dbReference>
<dbReference type="Gene3D" id="3.30.420.80">
    <property type="entry name" value="Ribosomal protein S11"/>
    <property type="match status" value="1"/>
</dbReference>
<dbReference type="HAMAP" id="MF_01310">
    <property type="entry name" value="Ribosomal_uS11"/>
    <property type="match status" value="1"/>
</dbReference>
<dbReference type="InterPro" id="IPR001971">
    <property type="entry name" value="Ribosomal_uS11"/>
</dbReference>
<dbReference type="InterPro" id="IPR019981">
    <property type="entry name" value="Ribosomal_uS11_bac-type"/>
</dbReference>
<dbReference type="InterPro" id="IPR018102">
    <property type="entry name" value="Ribosomal_uS11_CS"/>
</dbReference>
<dbReference type="InterPro" id="IPR036967">
    <property type="entry name" value="Ribosomal_uS11_sf"/>
</dbReference>
<dbReference type="NCBIfam" id="NF003698">
    <property type="entry name" value="PRK05309.1"/>
    <property type="match status" value="1"/>
</dbReference>
<dbReference type="NCBIfam" id="TIGR03632">
    <property type="entry name" value="uS11_bact"/>
    <property type="match status" value="1"/>
</dbReference>
<dbReference type="PANTHER" id="PTHR11759">
    <property type="entry name" value="40S RIBOSOMAL PROTEIN S14/30S RIBOSOMAL PROTEIN S11"/>
    <property type="match status" value="1"/>
</dbReference>
<dbReference type="Pfam" id="PF00411">
    <property type="entry name" value="Ribosomal_S11"/>
    <property type="match status" value="1"/>
</dbReference>
<dbReference type="PIRSF" id="PIRSF002131">
    <property type="entry name" value="Ribosomal_S11"/>
    <property type="match status" value="1"/>
</dbReference>
<dbReference type="SUPFAM" id="SSF53137">
    <property type="entry name" value="Translational machinery components"/>
    <property type="match status" value="1"/>
</dbReference>
<dbReference type="PROSITE" id="PS00054">
    <property type="entry name" value="RIBOSOMAL_S11"/>
    <property type="match status" value="1"/>
</dbReference>
<gene>
    <name evidence="1" type="primary">rpsK</name>
    <name type="ordered locus">DIP0547</name>
</gene>
<name>RS11_CORDI</name>
<reference key="1">
    <citation type="journal article" date="2003" name="Nucleic Acids Res.">
        <title>The complete genome sequence and analysis of Corynebacterium diphtheriae NCTC13129.</title>
        <authorList>
            <person name="Cerdeno-Tarraga A.-M."/>
            <person name="Efstratiou A."/>
            <person name="Dover L.G."/>
            <person name="Holden M.T.G."/>
            <person name="Pallen M.J."/>
            <person name="Bentley S.D."/>
            <person name="Besra G.S."/>
            <person name="Churcher C.M."/>
            <person name="James K.D."/>
            <person name="De Zoysa A."/>
            <person name="Chillingworth T."/>
            <person name="Cronin A."/>
            <person name="Dowd L."/>
            <person name="Feltwell T."/>
            <person name="Hamlin N."/>
            <person name="Holroyd S."/>
            <person name="Jagels K."/>
            <person name="Moule S."/>
            <person name="Quail M.A."/>
            <person name="Rabbinowitsch E."/>
            <person name="Rutherford K.M."/>
            <person name="Thomson N.R."/>
            <person name="Unwin L."/>
            <person name="Whitehead S."/>
            <person name="Barrell B.G."/>
            <person name="Parkhill J."/>
        </authorList>
    </citation>
    <scope>NUCLEOTIDE SEQUENCE [LARGE SCALE GENOMIC DNA]</scope>
    <source>
        <strain>ATCC 700971 / NCTC 13129 / Biotype gravis</strain>
    </source>
</reference>
<keyword id="KW-1185">Reference proteome</keyword>
<keyword id="KW-0687">Ribonucleoprotein</keyword>
<keyword id="KW-0689">Ribosomal protein</keyword>
<keyword id="KW-0694">RNA-binding</keyword>
<keyword id="KW-0699">rRNA-binding</keyword>
<evidence type="ECO:0000255" key="1">
    <source>
        <dbReference type="HAMAP-Rule" id="MF_01310"/>
    </source>
</evidence>
<evidence type="ECO:0000305" key="2"/>
<comment type="function">
    <text evidence="1">Located on the platform of the 30S subunit, it bridges several disparate RNA helices of the 16S rRNA. Forms part of the Shine-Dalgarno cleft in the 70S ribosome.</text>
</comment>
<comment type="subunit">
    <text evidence="1">Part of the 30S ribosomal subunit. Interacts with proteins S7 and S18. Binds to IF-3.</text>
</comment>
<comment type="similarity">
    <text evidence="1">Belongs to the universal ribosomal protein uS11 family.</text>
</comment>
<protein>
    <recommendedName>
        <fullName evidence="1">Small ribosomal subunit protein uS11</fullName>
    </recommendedName>
    <alternativeName>
        <fullName evidence="2">30S ribosomal protein S11</fullName>
    </alternativeName>
</protein>
<sequence>MPPKTRSTARRSGRRVVKKNVAQGHAYIKSTFNNTIVSITDPSGAVIAWASSGHVGFKGSRKSTPFAAQLAAENAARKAMDHGMKKVDVFVKGPGSGRETAIRSLQAAGLEVTSISDVTPQPFNGCRPPKRRRV</sequence>